<name>ATPF_VIBVU</name>
<gene>
    <name evidence="1" type="primary">atpF</name>
    <name type="ordered locus">VV1_1017</name>
</gene>
<keyword id="KW-0066">ATP synthesis</keyword>
<keyword id="KW-0997">Cell inner membrane</keyword>
<keyword id="KW-1003">Cell membrane</keyword>
<keyword id="KW-0138">CF(0)</keyword>
<keyword id="KW-0375">Hydrogen ion transport</keyword>
<keyword id="KW-0406">Ion transport</keyword>
<keyword id="KW-0472">Membrane</keyword>
<keyword id="KW-0812">Transmembrane</keyword>
<keyword id="KW-1133">Transmembrane helix</keyword>
<keyword id="KW-0813">Transport</keyword>
<reference key="1">
    <citation type="submission" date="2002-12" db="EMBL/GenBank/DDBJ databases">
        <title>Complete genome sequence of Vibrio vulnificus CMCP6.</title>
        <authorList>
            <person name="Rhee J.H."/>
            <person name="Kim S.Y."/>
            <person name="Chung S.S."/>
            <person name="Kim J.J."/>
            <person name="Moon Y.H."/>
            <person name="Jeong H."/>
            <person name="Choy H.E."/>
        </authorList>
    </citation>
    <scope>NUCLEOTIDE SEQUENCE [LARGE SCALE GENOMIC DNA]</scope>
    <source>
        <strain>CMCP6</strain>
    </source>
</reference>
<comment type="function">
    <text evidence="1">F(1)F(0) ATP synthase produces ATP from ADP in the presence of a proton or sodium gradient. F-type ATPases consist of two structural domains, F(1) containing the extramembraneous catalytic core and F(0) containing the membrane proton channel, linked together by a central stalk and a peripheral stalk. During catalysis, ATP synthesis in the catalytic domain of F(1) is coupled via a rotary mechanism of the central stalk subunits to proton translocation.</text>
</comment>
<comment type="function">
    <text evidence="1">Component of the F(0) channel, it forms part of the peripheral stalk, linking F(1) to F(0).</text>
</comment>
<comment type="subunit">
    <text evidence="1">F-type ATPases have 2 components, F(1) - the catalytic core - and F(0) - the membrane proton channel. F(1) has five subunits: alpha(3), beta(3), gamma(1), delta(1), epsilon(1). F(0) has three main subunits: a(1), b(2) and c(10-14). The alpha and beta chains form an alternating ring which encloses part of the gamma chain. F(1) is attached to F(0) by a central stalk formed by the gamma and epsilon chains, while a peripheral stalk is formed by the delta and b chains.</text>
</comment>
<comment type="subcellular location">
    <subcellularLocation>
        <location evidence="1">Cell inner membrane</location>
        <topology evidence="1">Single-pass membrane protein</topology>
    </subcellularLocation>
</comment>
<comment type="similarity">
    <text evidence="1">Belongs to the ATPase B chain family.</text>
</comment>
<protein>
    <recommendedName>
        <fullName evidence="1">ATP synthase subunit b</fullName>
    </recommendedName>
    <alternativeName>
        <fullName evidence="1">ATP synthase F(0) sector subunit b</fullName>
    </alternativeName>
    <alternativeName>
        <fullName evidence="1">ATPase subunit I</fullName>
    </alternativeName>
    <alternativeName>
        <fullName evidence="1">F-type ATPase subunit b</fullName>
        <shortName evidence="1">F-ATPase subunit b</shortName>
    </alternativeName>
</protein>
<dbReference type="EMBL" id="AE016795">
    <property type="protein sequence ID" value="AAO09505.2"/>
    <property type="molecule type" value="Genomic_DNA"/>
</dbReference>
<dbReference type="RefSeq" id="WP_011079051.1">
    <property type="nucleotide sequence ID" value="NC_004459.3"/>
</dbReference>
<dbReference type="SMR" id="Q8DDH2"/>
<dbReference type="KEGG" id="vvu:VV1_1017"/>
<dbReference type="HOGENOM" id="CLU_079215_4_5_6"/>
<dbReference type="Proteomes" id="UP000002275">
    <property type="component" value="Chromosome 1"/>
</dbReference>
<dbReference type="GO" id="GO:0005886">
    <property type="term" value="C:plasma membrane"/>
    <property type="evidence" value="ECO:0007669"/>
    <property type="project" value="UniProtKB-SubCell"/>
</dbReference>
<dbReference type="GO" id="GO:0045259">
    <property type="term" value="C:proton-transporting ATP synthase complex"/>
    <property type="evidence" value="ECO:0007669"/>
    <property type="project" value="UniProtKB-KW"/>
</dbReference>
<dbReference type="GO" id="GO:0046933">
    <property type="term" value="F:proton-transporting ATP synthase activity, rotational mechanism"/>
    <property type="evidence" value="ECO:0007669"/>
    <property type="project" value="UniProtKB-UniRule"/>
</dbReference>
<dbReference type="GO" id="GO:0046961">
    <property type="term" value="F:proton-transporting ATPase activity, rotational mechanism"/>
    <property type="evidence" value="ECO:0007669"/>
    <property type="project" value="TreeGrafter"/>
</dbReference>
<dbReference type="CDD" id="cd06503">
    <property type="entry name" value="ATP-synt_Fo_b"/>
    <property type="match status" value="1"/>
</dbReference>
<dbReference type="Gene3D" id="6.10.250.1580">
    <property type="match status" value="1"/>
</dbReference>
<dbReference type="HAMAP" id="MF_01398">
    <property type="entry name" value="ATP_synth_b_bprime"/>
    <property type="match status" value="1"/>
</dbReference>
<dbReference type="InterPro" id="IPR028987">
    <property type="entry name" value="ATP_synth_B-like_membr_sf"/>
</dbReference>
<dbReference type="InterPro" id="IPR002146">
    <property type="entry name" value="ATP_synth_b/b'su_bac/chlpt"/>
</dbReference>
<dbReference type="InterPro" id="IPR005864">
    <property type="entry name" value="ATP_synth_F0_bsu_bac"/>
</dbReference>
<dbReference type="InterPro" id="IPR050059">
    <property type="entry name" value="ATP_synthase_B_chain"/>
</dbReference>
<dbReference type="NCBIfam" id="TIGR01144">
    <property type="entry name" value="ATP_synt_b"/>
    <property type="match status" value="1"/>
</dbReference>
<dbReference type="NCBIfam" id="NF004411">
    <property type="entry name" value="PRK05759.1-2"/>
    <property type="match status" value="1"/>
</dbReference>
<dbReference type="NCBIfam" id="NF004413">
    <property type="entry name" value="PRK05759.1-4"/>
    <property type="match status" value="1"/>
</dbReference>
<dbReference type="PANTHER" id="PTHR33445:SF1">
    <property type="entry name" value="ATP SYNTHASE SUBUNIT B"/>
    <property type="match status" value="1"/>
</dbReference>
<dbReference type="PANTHER" id="PTHR33445">
    <property type="entry name" value="ATP SYNTHASE SUBUNIT B', CHLOROPLASTIC"/>
    <property type="match status" value="1"/>
</dbReference>
<dbReference type="Pfam" id="PF00430">
    <property type="entry name" value="ATP-synt_B"/>
    <property type="match status" value="1"/>
</dbReference>
<dbReference type="SUPFAM" id="SSF81573">
    <property type="entry name" value="F1F0 ATP synthase subunit B, membrane domain"/>
    <property type="match status" value="1"/>
</dbReference>
<organism>
    <name type="scientific">Vibrio vulnificus (strain CMCP6)</name>
    <dbReference type="NCBI Taxonomy" id="216895"/>
    <lineage>
        <taxon>Bacteria</taxon>
        <taxon>Pseudomonadati</taxon>
        <taxon>Pseudomonadota</taxon>
        <taxon>Gammaproteobacteria</taxon>
        <taxon>Vibrionales</taxon>
        <taxon>Vibrionaceae</taxon>
        <taxon>Vibrio</taxon>
    </lineage>
</organism>
<evidence type="ECO:0000255" key="1">
    <source>
        <dbReference type="HAMAP-Rule" id="MF_01398"/>
    </source>
</evidence>
<sequence>MNMNATLLGQAISFAMFVWFCMKYVWPPIMQAIEERQKKIADGLQAAERAAKDLDLAQANASSQLKEAKRTATEIIEQANKRKAQILDEAREDAQTERQKILAQAEAQLEAERNRARDELRKQVATLAVAGAEKILERSIDKDAHKDILDNITAKL</sequence>
<feature type="chain" id="PRO_0000082398" description="ATP synthase subunit b">
    <location>
        <begin position="1"/>
        <end position="156"/>
    </location>
</feature>
<feature type="transmembrane region" description="Helical" evidence="1">
    <location>
        <begin position="7"/>
        <end position="29"/>
    </location>
</feature>
<accession>Q8DDH2</accession>
<proteinExistence type="inferred from homology"/>